<organism>
    <name type="scientific">Wolbachia sp. subsp. Brugia malayi (strain TRS)</name>
    <dbReference type="NCBI Taxonomy" id="292805"/>
    <lineage>
        <taxon>Bacteria</taxon>
        <taxon>Pseudomonadati</taxon>
        <taxon>Pseudomonadota</taxon>
        <taxon>Alphaproteobacteria</taxon>
        <taxon>Rickettsiales</taxon>
        <taxon>Anaplasmataceae</taxon>
        <taxon>Wolbachieae</taxon>
        <taxon>Wolbachia</taxon>
    </lineage>
</organism>
<dbReference type="EMBL" id="AE017321">
    <property type="protein sequence ID" value="AAW70906.1"/>
    <property type="molecule type" value="Genomic_DNA"/>
</dbReference>
<dbReference type="RefSeq" id="WP_011256516.1">
    <property type="nucleotide sequence ID" value="NC_006833.1"/>
</dbReference>
<dbReference type="SMR" id="Q5GSW8"/>
<dbReference type="STRING" id="292805.Wbm0317"/>
<dbReference type="KEGG" id="wbm:Wbm0317"/>
<dbReference type="eggNOG" id="COG0203">
    <property type="taxonomic scope" value="Bacteria"/>
</dbReference>
<dbReference type="HOGENOM" id="CLU_074407_2_0_5"/>
<dbReference type="Proteomes" id="UP000000534">
    <property type="component" value="Chromosome"/>
</dbReference>
<dbReference type="GO" id="GO:0022625">
    <property type="term" value="C:cytosolic large ribosomal subunit"/>
    <property type="evidence" value="ECO:0007669"/>
    <property type="project" value="TreeGrafter"/>
</dbReference>
<dbReference type="GO" id="GO:0003735">
    <property type="term" value="F:structural constituent of ribosome"/>
    <property type="evidence" value="ECO:0007669"/>
    <property type="project" value="InterPro"/>
</dbReference>
<dbReference type="GO" id="GO:0006412">
    <property type="term" value="P:translation"/>
    <property type="evidence" value="ECO:0007669"/>
    <property type="project" value="UniProtKB-UniRule"/>
</dbReference>
<dbReference type="Gene3D" id="3.90.1030.10">
    <property type="entry name" value="Ribosomal protein L17"/>
    <property type="match status" value="1"/>
</dbReference>
<dbReference type="HAMAP" id="MF_01368">
    <property type="entry name" value="Ribosomal_bL17"/>
    <property type="match status" value="1"/>
</dbReference>
<dbReference type="InterPro" id="IPR000456">
    <property type="entry name" value="Ribosomal_bL17"/>
</dbReference>
<dbReference type="InterPro" id="IPR036373">
    <property type="entry name" value="Ribosomal_bL17_sf"/>
</dbReference>
<dbReference type="NCBIfam" id="TIGR00059">
    <property type="entry name" value="L17"/>
    <property type="match status" value="1"/>
</dbReference>
<dbReference type="PANTHER" id="PTHR14413:SF16">
    <property type="entry name" value="LARGE RIBOSOMAL SUBUNIT PROTEIN BL17M"/>
    <property type="match status" value="1"/>
</dbReference>
<dbReference type="PANTHER" id="PTHR14413">
    <property type="entry name" value="RIBOSOMAL PROTEIN L17"/>
    <property type="match status" value="1"/>
</dbReference>
<dbReference type="Pfam" id="PF01196">
    <property type="entry name" value="Ribosomal_L17"/>
    <property type="match status" value="1"/>
</dbReference>
<dbReference type="SUPFAM" id="SSF64263">
    <property type="entry name" value="Prokaryotic ribosomal protein L17"/>
    <property type="match status" value="1"/>
</dbReference>
<evidence type="ECO:0000255" key="1">
    <source>
        <dbReference type="HAMAP-Rule" id="MF_01368"/>
    </source>
</evidence>
<evidence type="ECO:0000305" key="2"/>
<sequence length="142" mass="16258">MKHKIKKRKLSRCTEHRLSMLKNLSISLINHEQIITTLPKAKELRPYVEKFITIAKNKNTLHGRRLLLSRLHNNKLVVDKLLNVLASRYQGCKGGYSRVMKFSTRKGDCASMAVIELVNRDVTAKGKVCDKNKEKNEVATKS</sequence>
<protein>
    <recommendedName>
        <fullName evidence="1">Large ribosomal subunit protein bL17</fullName>
    </recommendedName>
    <alternativeName>
        <fullName evidence="2">50S ribosomal protein L17</fullName>
    </alternativeName>
</protein>
<comment type="subunit">
    <text evidence="1">Part of the 50S ribosomal subunit. Contacts protein L32.</text>
</comment>
<comment type="similarity">
    <text evidence="1">Belongs to the bacterial ribosomal protein bL17 family.</text>
</comment>
<feature type="chain" id="PRO_1000055993" description="Large ribosomal subunit protein bL17">
    <location>
        <begin position="1"/>
        <end position="142"/>
    </location>
</feature>
<name>RL17_WOLTR</name>
<keyword id="KW-1185">Reference proteome</keyword>
<keyword id="KW-0687">Ribonucleoprotein</keyword>
<keyword id="KW-0689">Ribosomal protein</keyword>
<proteinExistence type="inferred from homology"/>
<gene>
    <name evidence="1" type="primary">rplQ</name>
    <name type="ordered locus">Wbm0317</name>
</gene>
<reference key="1">
    <citation type="journal article" date="2005" name="PLoS Biol.">
        <title>The Wolbachia genome of Brugia malayi: endosymbiont evolution within a human pathogenic nematode.</title>
        <authorList>
            <person name="Foster J."/>
            <person name="Ganatra M."/>
            <person name="Kamal I."/>
            <person name="Ware J."/>
            <person name="Makarova K."/>
            <person name="Ivanova N."/>
            <person name="Bhattacharyya A."/>
            <person name="Kapatral V."/>
            <person name="Kumar S."/>
            <person name="Posfai J."/>
            <person name="Vincze T."/>
            <person name="Ingram J."/>
            <person name="Moran L."/>
            <person name="Lapidus A."/>
            <person name="Omelchenko M."/>
            <person name="Kyrpides N."/>
            <person name="Ghedin E."/>
            <person name="Wang S."/>
            <person name="Goltsman E."/>
            <person name="Joukov V."/>
            <person name="Ostrovskaya O."/>
            <person name="Tsukerman K."/>
            <person name="Mazur M."/>
            <person name="Comb D."/>
            <person name="Koonin E."/>
            <person name="Slatko B."/>
        </authorList>
    </citation>
    <scope>NUCLEOTIDE SEQUENCE [LARGE SCALE GENOMIC DNA]</scope>
    <source>
        <strain>TRS</strain>
    </source>
</reference>
<accession>Q5GSW8</accession>